<accession>Q5HG39</accession>
<dbReference type="EMBL" id="CP000046">
    <property type="protein sequence ID" value="AAW38161.1"/>
    <property type="molecule type" value="Genomic_DNA"/>
</dbReference>
<dbReference type="RefSeq" id="WP_000548932.1">
    <property type="nucleotide sequence ID" value="NZ_JBGOFO010000003.1"/>
</dbReference>
<dbReference type="SMR" id="Q5HG39"/>
<dbReference type="KEGG" id="sac:SACOL1416"/>
<dbReference type="HOGENOM" id="CLU_028518_5_3_9"/>
<dbReference type="Proteomes" id="UP000000530">
    <property type="component" value="Chromosome"/>
</dbReference>
<dbReference type="GO" id="GO:0005886">
    <property type="term" value="C:plasma membrane"/>
    <property type="evidence" value="ECO:0007669"/>
    <property type="project" value="UniProtKB-SubCell"/>
</dbReference>
<dbReference type="GO" id="GO:0015675">
    <property type="term" value="P:nickel cation transport"/>
    <property type="evidence" value="ECO:0007669"/>
    <property type="project" value="UniProtKB-KW"/>
</dbReference>
<dbReference type="GO" id="GO:0055085">
    <property type="term" value="P:transmembrane transport"/>
    <property type="evidence" value="ECO:0007669"/>
    <property type="project" value="InterPro"/>
</dbReference>
<dbReference type="CDD" id="cd06261">
    <property type="entry name" value="TM_PBP2"/>
    <property type="match status" value="1"/>
</dbReference>
<dbReference type="Gene3D" id="1.10.3720.10">
    <property type="entry name" value="MetI-like"/>
    <property type="match status" value="1"/>
</dbReference>
<dbReference type="InterPro" id="IPR053385">
    <property type="entry name" value="ABC_transport_permease"/>
</dbReference>
<dbReference type="InterPro" id="IPR050366">
    <property type="entry name" value="BP-dependent_transpt_permease"/>
</dbReference>
<dbReference type="InterPro" id="IPR000515">
    <property type="entry name" value="MetI-like"/>
</dbReference>
<dbReference type="InterPro" id="IPR035906">
    <property type="entry name" value="MetI-like_sf"/>
</dbReference>
<dbReference type="NCBIfam" id="NF045474">
    <property type="entry name" value="Opp2C"/>
    <property type="match status" value="1"/>
</dbReference>
<dbReference type="PANTHER" id="PTHR43386:SF1">
    <property type="entry name" value="D,D-DIPEPTIDE TRANSPORT SYSTEM PERMEASE PROTEIN DDPC-RELATED"/>
    <property type="match status" value="1"/>
</dbReference>
<dbReference type="PANTHER" id="PTHR43386">
    <property type="entry name" value="OLIGOPEPTIDE TRANSPORT SYSTEM PERMEASE PROTEIN APPC"/>
    <property type="match status" value="1"/>
</dbReference>
<dbReference type="Pfam" id="PF00528">
    <property type="entry name" value="BPD_transp_1"/>
    <property type="match status" value="1"/>
</dbReference>
<dbReference type="SUPFAM" id="SSF161098">
    <property type="entry name" value="MetI-like"/>
    <property type="match status" value="1"/>
</dbReference>
<dbReference type="PROSITE" id="PS50928">
    <property type="entry name" value="ABC_TM1"/>
    <property type="match status" value="1"/>
</dbReference>
<feature type="chain" id="PRO_0000276784" description="Nickel import system permease protein NikC">
    <location>
        <begin position="1"/>
        <end position="276"/>
    </location>
</feature>
<feature type="transmembrane region" description="Helical" evidence="2">
    <location>
        <begin position="10"/>
        <end position="30"/>
    </location>
</feature>
<feature type="transmembrane region" description="Helical" evidence="2">
    <location>
        <begin position="73"/>
        <end position="93"/>
    </location>
</feature>
<feature type="transmembrane region" description="Helical" evidence="2">
    <location>
        <begin position="108"/>
        <end position="128"/>
    </location>
</feature>
<feature type="transmembrane region" description="Helical" evidence="2">
    <location>
        <begin position="186"/>
        <end position="206"/>
    </location>
</feature>
<feature type="transmembrane region" description="Helical" evidence="2">
    <location>
        <begin position="238"/>
        <end position="258"/>
    </location>
</feature>
<feature type="domain" description="ABC transmembrane type-1" evidence="2">
    <location>
        <begin position="69"/>
        <end position="258"/>
    </location>
</feature>
<gene>
    <name evidence="1" type="primary">nikC</name>
    <name type="synonym">oppC2</name>
    <name type="ordered locus">SACOL1416</name>
</gene>
<organism>
    <name type="scientific">Staphylococcus aureus (strain COL)</name>
    <dbReference type="NCBI Taxonomy" id="93062"/>
    <lineage>
        <taxon>Bacteria</taxon>
        <taxon>Bacillati</taxon>
        <taxon>Bacillota</taxon>
        <taxon>Bacilli</taxon>
        <taxon>Bacillales</taxon>
        <taxon>Staphylococcaceae</taxon>
        <taxon>Staphylococcus</taxon>
    </lineage>
</organism>
<name>NIKC_STAAC</name>
<sequence>MHKIFSKNNLIFFVFVAFIFVVIVLQFFVSSENATKVNLSQTFEPISWLHLLGTDDYGRDLFTRIIIGARSTLFVTVLTLIAIVVIGVTLGLFAGYKKGWIERLVLRFIDVGLSIPEFIIMIALASFFQPSLWNLVISITLIKWMNYTRLTRSIVNSEMNKPYIKMAQLFHVPTRTILIRHLTPKIIPAIIVLMVVDFGKIILYISSLSFIGLGAQPPTPEWGAMLQQGRDFISSHPIMLIAPASVIAITILIFNLTGDALRDRLLKQRGEYDESH</sequence>
<proteinExistence type="inferred from homology"/>
<protein>
    <recommendedName>
        <fullName evidence="1">Nickel import system permease protein NikC</fullName>
    </recommendedName>
</protein>
<reference key="1">
    <citation type="journal article" date="2005" name="J. Bacteriol.">
        <title>Insights on evolution of virulence and resistance from the complete genome analysis of an early methicillin-resistant Staphylococcus aureus strain and a biofilm-producing methicillin-resistant Staphylococcus epidermidis strain.</title>
        <authorList>
            <person name="Gill S.R."/>
            <person name="Fouts D.E."/>
            <person name="Archer G.L."/>
            <person name="Mongodin E.F."/>
            <person name="DeBoy R.T."/>
            <person name="Ravel J."/>
            <person name="Paulsen I.T."/>
            <person name="Kolonay J.F."/>
            <person name="Brinkac L.M."/>
            <person name="Beanan M.J."/>
            <person name="Dodson R.J."/>
            <person name="Daugherty S.C."/>
            <person name="Madupu R."/>
            <person name="Angiuoli S.V."/>
            <person name="Durkin A.S."/>
            <person name="Haft D.H."/>
            <person name="Vamathevan J.J."/>
            <person name="Khouri H."/>
            <person name="Utterback T.R."/>
            <person name="Lee C."/>
            <person name="Dimitrov G."/>
            <person name="Jiang L."/>
            <person name="Qin H."/>
            <person name="Weidman J."/>
            <person name="Tran K."/>
            <person name="Kang K.H."/>
            <person name="Hance I.R."/>
            <person name="Nelson K.E."/>
            <person name="Fraser C.M."/>
        </authorList>
    </citation>
    <scope>NUCLEOTIDE SEQUENCE [LARGE SCALE GENOMIC DNA]</scope>
    <source>
        <strain>COL</strain>
    </source>
</reference>
<evidence type="ECO:0000250" key="1">
    <source>
        <dbReference type="UniProtKB" id="Q2FYQ6"/>
    </source>
</evidence>
<evidence type="ECO:0000255" key="2">
    <source>
        <dbReference type="PROSITE-ProRule" id="PRU00441"/>
    </source>
</evidence>
<evidence type="ECO:0000305" key="3"/>
<keyword id="KW-1003">Cell membrane</keyword>
<keyword id="KW-0406">Ion transport</keyword>
<keyword id="KW-0472">Membrane</keyword>
<keyword id="KW-0533">Nickel</keyword>
<keyword id="KW-0921">Nickel transport</keyword>
<keyword id="KW-0812">Transmembrane</keyword>
<keyword id="KW-1133">Transmembrane helix</keyword>
<keyword id="KW-0813">Transport</keyword>
<comment type="function">
    <text evidence="1">Part of the ABC transporter complex NikABCDE (Opp2) involved in nickel import. Probably responsible for the translocation of the substrate across the membrane.</text>
</comment>
<comment type="subunit">
    <text evidence="1">The complex is composed of two ATP-binding proteins (NikD and NikE), two transmembrane proteins (NikB and NikC) and a solute-binding protein (NikA).</text>
</comment>
<comment type="subcellular location">
    <subcellularLocation>
        <location evidence="3">Cell membrane</location>
        <topology evidence="2">Multi-pass membrane protein</topology>
    </subcellularLocation>
</comment>
<comment type="similarity">
    <text evidence="3">Belongs to the binding-protein-dependent transport system permease family. OppBC subfamily.</text>
</comment>